<keyword id="KW-0687">Ribonucleoprotein</keyword>
<keyword id="KW-0689">Ribosomal protein</keyword>
<keyword id="KW-0694">RNA-binding</keyword>
<keyword id="KW-0699">rRNA-binding</keyword>
<proteinExistence type="inferred from homology"/>
<organism>
    <name type="scientific">Clostridium beijerinckii (strain ATCC 51743 / NCIMB 8052)</name>
    <name type="common">Clostridium acetobutylicum</name>
    <dbReference type="NCBI Taxonomy" id="290402"/>
    <lineage>
        <taxon>Bacteria</taxon>
        <taxon>Bacillati</taxon>
        <taxon>Bacillota</taxon>
        <taxon>Clostridia</taxon>
        <taxon>Eubacteriales</taxon>
        <taxon>Clostridiaceae</taxon>
        <taxon>Clostridium</taxon>
    </lineage>
</organism>
<gene>
    <name evidence="1" type="primary">rplO</name>
    <name type="ordered locus">Cbei_0170</name>
</gene>
<name>RL15_CLOB8</name>
<sequence>MKLHELKPAAGSKKAPKRIGRGTGSGLGRNAGKGEKGQNARSGGGVRPGFEGGQMPLYRRLPKRGFTNIFAKKIVSINLDRLNIFENGTEVTPELLLERRVVSKVLDGVKILGNGTLEKSLTVKGCKFSKSAIEKIEAAGGKVEVM</sequence>
<evidence type="ECO:0000255" key="1">
    <source>
        <dbReference type="HAMAP-Rule" id="MF_01341"/>
    </source>
</evidence>
<evidence type="ECO:0000256" key="2">
    <source>
        <dbReference type="SAM" id="MobiDB-lite"/>
    </source>
</evidence>
<evidence type="ECO:0000305" key="3"/>
<protein>
    <recommendedName>
        <fullName evidence="1">Large ribosomal subunit protein uL15</fullName>
    </recommendedName>
    <alternativeName>
        <fullName evidence="3">50S ribosomal protein L15</fullName>
    </alternativeName>
</protein>
<reference key="1">
    <citation type="submission" date="2007-06" db="EMBL/GenBank/DDBJ databases">
        <title>Complete sequence of Clostridium beijerinckii NCIMB 8052.</title>
        <authorList>
            <consortium name="US DOE Joint Genome Institute"/>
            <person name="Copeland A."/>
            <person name="Lucas S."/>
            <person name="Lapidus A."/>
            <person name="Barry K."/>
            <person name="Detter J.C."/>
            <person name="Glavina del Rio T."/>
            <person name="Hammon N."/>
            <person name="Israni S."/>
            <person name="Dalin E."/>
            <person name="Tice H."/>
            <person name="Pitluck S."/>
            <person name="Sims D."/>
            <person name="Brettin T."/>
            <person name="Bruce D."/>
            <person name="Tapia R."/>
            <person name="Brainard J."/>
            <person name="Schmutz J."/>
            <person name="Larimer F."/>
            <person name="Land M."/>
            <person name="Hauser L."/>
            <person name="Kyrpides N."/>
            <person name="Mikhailova N."/>
            <person name="Bennet G."/>
            <person name="Cann I."/>
            <person name="Chen J.-S."/>
            <person name="Contreras A.L."/>
            <person name="Jones D."/>
            <person name="Kashket E."/>
            <person name="Mitchell W."/>
            <person name="Stoddard S."/>
            <person name="Schwarz W."/>
            <person name="Qureshi N."/>
            <person name="Young M."/>
            <person name="Shi Z."/>
            <person name="Ezeji T."/>
            <person name="White B."/>
            <person name="Blaschek H."/>
            <person name="Richardson P."/>
        </authorList>
    </citation>
    <scope>NUCLEOTIDE SEQUENCE [LARGE SCALE GENOMIC DNA]</scope>
    <source>
        <strain>ATCC 51743 / NCIMB 8052</strain>
    </source>
</reference>
<dbReference type="EMBL" id="CP000721">
    <property type="protein sequence ID" value="ABR32360.1"/>
    <property type="molecule type" value="Genomic_DNA"/>
</dbReference>
<dbReference type="RefSeq" id="WP_011967525.1">
    <property type="nucleotide sequence ID" value="NC_009617.1"/>
</dbReference>
<dbReference type="SMR" id="A6LPT0"/>
<dbReference type="GeneID" id="66343060"/>
<dbReference type="KEGG" id="cbe:Cbei_0170"/>
<dbReference type="eggNOG" id="COG0200">
    <property type="taxonomic scope" value="Bacteria"/>
</dbReference>
<dbReference type="HOGENOM" id="CLU_055188_4_2_9"/>
<dbReference type="Proteomes" id="UP000000565">
    <property type="component" value="Chromosome"/>
</dbReference>
<dbReference type="GO" id="GO:0022625">
    <property type="term" value="C:cytosolic large ribosomal subunit"/>
    <property type="evidence" value="ECO:0007669"/>
    <property type="project" value="TreeGrafter"/>
</dbReference>
<dbReference type="GO" id="GO:0019843">
    <property type="term" value="F:rRNA binding"/>
    <property type="evidence" value="ECO:0007669"/>
    <property type="project" value="UniProtKB-UniRule"/>
</dbReference>
<dbReference type="GO" id="GO:0003735">
    <property type="term" value="F:structural constituent of ribosome"/>
    <property type="evidence" value="ECO:0007669"/>
    <property type="project" value="InterPro"/>
</dbReference>
<dbReference type="GO" id="GO:0006412">
    <property type="term" value="P:translation"/>
    <property type="evidence" value="ECO:0007669"/>
    <property type="project" value="UniProtKB-UniRule"/>
</dbReference>
<dbReference type="Gene3D" id="3.100.10.10">
    <property type="match status" value="1"/>
</dbReference>
<dbReference type="HAMAP" id="MF_01341">
    <property type="entry name" value="Ribosomal_uL15"/>
    <property type="match status" value="1"/>
</dbReference>
<dbReference type="InterPro" id="IPR030878">
    <property type="entry name" value="Ribosomal_uL15"/>
</dbReference>
<dbReference type="InterPro" id="IPR021131">
    <property type="entry name" value="Ribosomal_uL15/eL18"/>
</dbReference>
<dbReference type="InterPro" id="IPR036227">
    <property type="entry name" value="Ribosomal_uL15/eL18_sf"/>
</dbReference>
<dbReference type="InterPro" id="IPR005749">
    <property type="entry name" value="Ribosomal_uL15_bac-type"/>
</dbReference>
<dbReference type="InterPro" id="IPR001196">
    <property type="entry name" value="Ribosomal_uL15_CS"/>
</dbReference>
<dbReference type="NCBIfam" id="TIGR01071">
    <property type="entry name" value="rplO_bact"/>
    <property type="match status" value="1"/>
</dbReference>
<dbReference type="PANTHER" id="PTHR12934">
    <property type="entry name" value="50S RIBOSOMAL PROTEIN L15"/>
    <property type="match status" value="1"/>
</dbReference>
<dbReference type="PANTHER" id="PTHR12934:SF11">
    <property type="entry name" value="LARGE RIBOSOMAL SUBUNIT PROTEIN UL15M"/>
    <property type="match status" value="1"/>
</dbReference>
<dbReference type="Pfam" id="PF00828">
    <property type="entry name" value="Ribosomal_L27A"/>
    <property type="match status" value="1"/>
</dbReference>
<dbReference type="SUPFAM" id="SSF52080">
    <property type="entry name" value="Ribosomal proteins L15p and L18e"/>
    <property type="match status" value="1"/>
</dbReference>
<dbReference type="PROSITE" id="PS00475">
    <property type="entry name" value="RIBOSOMAL_L15"/>
    <property type="match status" value="1"/>
</dbReference>
<accession>A6LPT0</accession>
<feature type="chain" id="PRO_1000086705" description="Large ribosomal subunit protein uL15">
    <location>
        <begin position="1"/>
        <end position="146"/>
    </location>
</feature>
<feature type="region of interest" description="Disordered" evidence="2">
    <location>
        <begin position="1"/>
        <end position="54"/>
    </location>
</feature>
<feature type="compositionally biased region" description="Gly residues" evidence="2">
    <location>
        <begin position="21"/>
        <end position="31"/>
    </location>
</feature>
<feature type="compositionally biased region" description="Gly residues" evidence="2">
    <location>
        <begin position="42"/>
        <end position="52"/>
    </location>
</feature>
<comment type="function">
    <text evidence="1">Binds to the 23S rRNA.</text>
</comment>
<comment type="subunit">
    <text evidence="1">Part of the 50S ribosomal subunit.</text>
</comment>
<comment type="similarity">
    <text evidence="1">Belongs to the universal ribosomal protein uL15 family.</text>
</comment>